<dbReference type="EMBL" id="AM933173">
    <property type="protein sequence ID" value="CAR39177.1"/>
    <property type="molecule type" value="Genomic_DNA"/>
</dbReference>
<dbReference type="RefSeq" id="WP_001059743.1">
    <property type="nucleotide sequence ID" value="NC_011274.1"/>
</dbReference>
<dbReference type="SMR" id="B5RFD4"/>
<dbReference type="KEGG" id="seg:SG3386"/>
<dbReference type="HOGENOM" id="CLU_056887_2_0_6"/>
<dbReference type="Proteomes" id="UP000008321">
    <property type="component" value="Chromosome"/>
</dbReference>
<dbReference type="GO" id="GO:0005737">
    <property type="term" value="C:cytoplasm"/>
    <property type="evidence" value="ECO:0007669"/>
    <property type="project" value="UniProtKB-SubCell"/>
</dbReference>
<dbReference type="GO" id="GO:0097163">
    <property type="term" value="F:sulfur carrier activity"/>
    <property type="evidence" value="ECO:0007669"/>
    <property type="project" value="UniProtKB-UniRule"/>
</dbReference>
<dbReference type="GO" id="GO:0016783">
    <property type="term" value="F:sulfurtransferase activity"/>
    <property type="evidence" value="ECO:0007669"/>
    <property type="project" value="InterPro"/>
</dbReference>
<dbReference type="GO" id="GO:0006777">
    <property type="term" value="P:Mo-molybdopterin cofactor biosynthetic process"/>
    <property type="evidence" value="ECO:0007669"/>
    <property type="project" value="UniProtKB-UniRule"/>
</dbReference>
<dbReference type="Gene3D" id="3.10.20.10">
    <property type="match status" value="1"/>
</dbReference>
<dbReference type="Gene3D" id="3.40.140.10">
    <property type="entry name" value="Cytidine Deaminase, domain 2"/>
    <property type="match status" value="1"/>
</dbReference>
<dbReference type="HAMAP" id="MF_00187">
    <property type="entry name" value="FdhD"/>
    <property type="match status" value="1"/>
</dbReference>
<dbReference type="InterPro" id="IPR016193">
    <property type="entry name" value="Cytidine_deaminase-like"/>
</dbReference>
<dbReference type="InterPro" id="IPR003786">
    <property type="entry name" value="FdhD"/>
</dbReference>
<dbReference type="NCBIfam" id="TIGR00129">
    <property type="entry name" value="fdhD_narQ"/>
    <property type="match status" value="1"/>
</dbReference>
<dbReference type="PANTHER" id="PTHR30592">
    <property type="entry name" value="FORMATE DEHYDROGENASE"/>
    <property type="match status" value="1"/>
</dbReference>
<dbReference type="PANTHER" id="PTHR30592:SF1">
    <property type="entry name" value="SULFUR CARRIER PROTEIN FDHD"/>
    <property type="match status" value="1"/>
</dbReference>
<dbReference type="Pfam" id="PF02634">
    <property type="entry name" value="FdhD-NarQ"/>
    <property type="match status" value="1"/>
</dbReference>
<dbReference type="PIRSF" id="PIRSF015626">
    <property type="entry name" value="FdhD"/>
    <property type="match status" value="1"/>
</dbReference>
<dbReference type="SUPFAM" id="SSF53927">
    <property type="entry name" value="Cytidine deaminase-like"/>
    <property type="match status" value="1"/>
</dbReference>
<reference key="1">
    <citation type="journal article" date="2008" name="Genome Res.">
        <title>Comparative genome analysis of Salmonella enteritidis PT4 and Salmonella gallinarum 287/91 provides insights into evolutionary and host adaptation pathways.</title>
        <authorList>
            <person name="Thomson N.R."/>
            <person name="Clayton D.J."/>
            <person name="Windhorst D."/>
            <person name="Vernikos G."/>
            <person name="Davidson S."/>
            <person name="Churcher C."/>
            <person name="Quail M.A."/>
            <person name="Stevens M."/>
            <person name="Jones M.A."/>
            <person name="Watson M."/>
            <person name="Barron A."/>
            <person name="Layton A."/>
            <person name="Pickard D."/>
            <person name="Kingsley R.A."/>
            <person name="Bignell A."/>
            <person name="Clark L."/>
            <person name="Harris B."/>
            <person name="Ormond D."/>
            <person name="Abdellah Z."/>
            <person name="Brooks K."/>
            <person name="Cherevach I."/>
            <person name="Chillingworth T."/>
            <person name="Woodward J."/>
            <person name="Norberczak H."/>
            <person name="Lord A."/>
            <person name="Arrowsmith C."/>
            <person name="Jagels K."/>
            <person name="Moule S."/>
            <person name="Mungall K."/>
            <person name="Saunders M."/>
            <person name="Whitehead S."/>
            <person name="Chabalgoity J.A."/>
            <person name="Maskell D."/>
            <person name="Humphreys T."/>
            <person name="Roberts M."/>
            <person name="Barrow P.A."/>
            <person name="Dougan G."/>
            <person name="Parkhill J."/>
        </authorList>
    </citation>
    <scope>NUCLEOTIDE SEQUENCE [LARGE SCALE GENOMIC DNA]</scope>
    <source>
        <strain>287/91 / NCTC 13346</strain>
    </source>
</reference>
<feature type="chain" id="PRO_1000098789" description="Sulfur carrier protein FdhD">
    <location>
        <begin position="1"/>
        <end position="278"/>
    </location>
</feature>
<feature type="active site" description="Cysteine persulfide intermediate" evidence="1">
    <location>
        <position position="121"/>
    </location>
</feature>
<feature type="binding site" evidence="1">
    <location>
        <begin position="260"/>
        <end position="265"/>
    </location>
    <ligand>
        <name>Mo-bis(molybdopterin guanine dinucleotide)</name>
        <dbReference type="ChEBI" id="CHEBI:60539"/>
    </ligand>
</feature>
<accession>B5RFD4</accession>
<name>FDHD_SALG2</name>
<sequence length="278" mass="30256">MNNILSEEVLNVTDFTTSRQLTLWKREDLQSPQLDDVAEEVPVALVYNGISHVVMMASPKDLTHFAMGFSLSEGIIDSPREIYGMDVVPSCNGLEVQIDLSSRRFMGLKARRRALAGRTGCGVCGVEQLNDIGKPVQPLPFSQTFNLGNLDRALKHLNDFQPTGKLTGCTHAAAWVMPSGELAGGHEDVGRHVALDKLLGRRATEGEEWRQGAALVSSRASYEMVQKSAMCGVEILFAVSAATTLAVDVAERCNLTLVGFCKPGRATIYTHPQRLIAD</sequence>
<gene>
    <name evidence="1" type="primary">fdhD</name>
    <name type="ordered locus">SG3386</name>
</gene>
<organism>
    <name type="scientific">Salmonella gallinarum (strain 287/91 / NCTC 13346)</name>
    <dbReference type="NCBI Taxonomy" id="550538"/>
    <lineage>
        <taxon>Bacteria</taxon>
        <taxon>Pseudomonadati</taxon>
        <taxon>Pseudomonadota</taxon>
        <taxon>Gammaproteobacteria</taxon>
        <taxon>Enterobacterales</taxon>
        <taxon>Enterobacteriaceae</taxon>
        <taxon>Salmonella</taxon>
    </lineage>
</organism>
<proteinExistence type="inferred from homology"/>
<evidence type="ECO:0000255" key="1">
    <source>
        <dbReference type="HAMAP-Rule" id="MF_00187"/>
    </source>
</evidence>
<protein>
    <recommendedName>
        <fullName evidence="1">Sulfur carrier protein FdhD</fullName>
    </recommendedName>
</protein>
<keyword id="KW-0963">Cytoplasm</keyword>
<keyword id="KW-0501">Molybdenum cofactor biosynthesis</keyword>
<comment type="function">
    <text evidence="1">Required for formate dehydrogenase (FDH) activity. Acts as a sulfur carrier protein that transfers sulfur from IscS to the molybdenum cofactor prior to its insertion into FDH.</text>
</comment>
<comment type="subcellular location">
    <subcellularLocation>
        <location evidence="1">Cytoplasm</location>
    </subcellularLocation>
</comment>
<comment type="similarity">
    <text evidence="1">Belongs to the FdhD family.</text>
</comment>